<keyword id="KW-0007">Acetylation</keyword>
<keyword id="KW-0010">Activator</keyword>
<keyword id="KW-0025">Alternative splicing</keyword>
<keyword id="KW-0037">Angiogenesis</keyword>
<keyword id="KW-0053">Apoptosis</keyword>
<keyword id="KW-0165">Cleavage on pair of basic residues</keyword>
<keyword id="KW-0963">Cytoplasm</keyword>
<keyword id="KW-0217">Developmental protein</keyword>
<keyword id="KW-0221">Differentiation</keyword>
<keyword id="KW-0238">DNA-binding</keyword>
<keyword id="KW-0256">Endoplasmic reticulum</keyword>
<keyword id="KW-0472">Membrane</keyword>
<keyword id="KW-0517">Myogenesis</keyword>
<keyword id="KW-0539">Nucleus</keyword>
<keyword id="KW-0597">Phosphoprotein</keyword>
<keyword id="KW-1185">Reference proteome</keyword>
<keyword id="KW-0735">Signal-anchor</keyword>
<keyword id="KW-0346">Stress response</keyword>
<keyword id="KW-0804">Transcription</keyword>
<keyword id="KW-0805">Transcription regulation</keyword>
<keyword id="KW-0812">Transmembrane</keyword>
<keyword id="KW-1133">Transmembrane helix</keyword>
<keyword id="KW-0832">Ubl conjugation</keyword>
<keyword id="KW-0834">Unfolded protein response</keyword>
<comment type="function">
    <text evidence="1 2">Functions as a transcription factor during endoplasmic reticulum (ER) stress by regulating the unfolded protein response (UPR). Required for cardiac myogenesis and hepatogenesis during embryonic development, and the development of secretory tissues such as exocrine pancreas and salivary gland. Involved in terminal differentiation of B lymphocytes to plasma cells and production of immunoglobulins. Modulates the cellular response to ER stress in a PIK3R-dependent manner. Binds to the cis-acting X box present in the promoter regions of major histocompatibility complex class II genes. Involved in VEGF-induced endothelial cell (EC) proliferation and retinal blood vessel formation during embryonic development but also for angiogenesis in adult tissues under ischemic conditions. Functions also as a major regulator of the UPR in obesity-induced insulin resistance and type 2 diabetes for the management of obesity and diabetes prevention.</text>
</comment>
<comment type="function">
    <molecule>Isoform 1</molecule>
    <text evidence="1 2">Acts as a weak transcriptional factor. Together with HDAC3, contributes to the activation of NFE2L2-mediated HMOX1 transcription factor gene expression in a PI(3)K/mTORC2/Akt-dependent signaling pathway leading to EC survival under disturbed flow/oxidative stress. Binds to the ER stress response element (ERSE) upon ER stress. Binds to the consensus 5'-GATGACGTG[TG]N(3)[AT]T-3' sequence related to cAMP responsive element (CRE)-like sequences. Associates preferentially to the HDAC3 gene promoter region in a static flow-dependent manner. Binds to the CDH5/VE-cadherin gene promoter region.</text>
</comment>
<comment type="subunit">
    <text evidence="1 2">Isoform 1 interacts with HM13. Isoform 1 interacts with RNF139; the interaction induces ubiquitination and degradation of isoform 1. Isoform 1 interacts (via luminal domain) with DERL1; the interaction obviates the need for ectodomain shedding prior HM13/SPP-mediated XBP1 isoform 1 cleavage. Isoform 1 interacts with HDAC3 and AKT1; the interactions occur in endothelial cell (EC) under disturbed flow. Isoform 1 interacts with the oncoprotein FOS. Interacts with SIRT1.</text>
</comment>
<comment type="subcellular location">
    <subcellularLocation>
        <location evidence="1 2">Nucleus</location>
    </subcellularLocation>
    <subcellularLocation>
        <location evidence="2">Endoplasmic reticulum</location>
    </subcellularLocation>
    <text evidence="2">Colocalizes with ERN1 and KDR in the endoplasmic reticulum in endothelial cells in a vascular endothelial growth factor (VEGF)-dependent manner. Colocalizes in the nucleus with SIRT1.</text>
</comment>
<comment type="subcellular location">
    <molecule>Isoform 1</molecule>
    <subcellularLocation>
        <location evidence="2">Nucleus</location>
    </subcellularLocation>
    <subcellularLocation>
        <location evidence="2">Cytoplasm</location>
    </subcellularLocation>
    <subcellularLocation>
        <location evidence="2">Endoplasmic reticulum membrane</location>
        <topology evidence="2">Single-pass type II membrane protein</topology>
    </subcellularLocation>
    <subcellularLocation>
        <location evidence="2">Endoplasmic reticulum membrane</location>
        <topology evidence="2">Peripheral membrane protein</topology>
    </subcellularLocation>
    <subcellularLocation>
        <location evidence="2">Membrane</location>
        <topology evidence="2">Peripheral membrane protein</topology>
    </subcellularLocation>
    <text evidence="1 2">Shows no preferential localization to either the nucleus or the cytoplasm. Shuttles between the nucleus and the cytoplasm in a CRM1-dependent manner. Localizes predominantly at the endoplasmic reticulum membrane as a membrane-spanning protein; whereas may be only marginally localized on the cytosolic side of the ER membrane as a peripheral membrane.</text>
</comment>
<comment type="alternative products">
    <event type="alternative splicing"/>
    <isoform>
        <id>Q9R1S4-1</id>
        <name>1</name>
        <sequence type="displayed"/>
    </isoform>
    <text evidence="6">Additional isoforms seem to exist.</text>
</comment>
<comment type="domain">
    <text evidence="1 2">Isoform 1 N-terminus domain is necessary for nuclear localization targeting. Isoform 1 C-terminus domain confers localization to the cytoplasm and is sufficient to impose rapid degradation. Isoform 1 N-terminus and C-terminus regions are necessary for DNA-binding and weak transcriptional activity, respectively.</text>
</comment>
<comment type="PTM">
    <text evidence="1 2">Isoform 1 is ubiquitinated, leading to proteasome-mediated degradation in response to ER stress.</text>
</comment>
<comment type="PTM">
    <text evidence="2">X-box-binding protein 1, cytoplasmic form and luminal form are produced by intramembrane proteolytic cleavage of ER membrane-anchored isoform 1 triggered by HM13/SPP in a DERL1-RNF139-dependent and VCP/p97-independent manner. X-box-binding protein 1, luminal form is ubiquitinated leading to proteasomal degradation.</text>
</comment>
<comment type="PTM">
    <text evidence="1 2">Acetylated by EP300; acetylation positively regulates the transcriptional activity of XBP1. Deacetylated by SIRT1; deacetylation negatively regulates the transcriptional activity of XBP1.</text>
</comment>
<comment type="similarity">
    <text evidence="6">Belongs to the bZIP family.</text>
</comment>
<accession>Q9R1S4</accession>
<proteinExistence type="evidence at transcript level"/>
<reference key="1">
    <citation type="journal article" date="2000" name="Gene">
        <title>Identity between rat htf and human xbp-1 genes: determination of gene structure, target sequence, and transcription promotion function for HTF.</title>
        <authorList>
            <person name="Kokura K."/>
            <person name="Kishimoto T."/>
            <person name="Tamura T."/>
        </authorList>
    </citation>
    <scope>NUCLEOTIDE SEQUENCE [GENOMIC DNA] (ISOFORM 1)</scope>
    <scope>FUNCTION</scope>
    <source>
        <strain>Wistar</strain>
    </source>
</reference>
<reference key="2">
    <citation type="journal article" date="2004" name="Genome Res.">
        <title>The status, quality, and expansion of the NIH full-length cDNA project: the Mammalian Gene Collection (MGC).</title>
        <authorList>
            <consortium name="The MGC Project Team"/>
        </authorList>
    </citation>
    <scope>NUCLEOTIDE SEQUENCE [LARGE SCALE MRNA] (ISOFORM 1)</scope>
    <source>
        <tissue>Testis</tissue>
    </source>
</reference>
<organism>
    <name type="scientific">Rattus norvegicus</name>
    <name type="common">Rat</name>
    <dbReference type="NCBI Taxonomy" id="10116"/>
    <lineage>
        <taxon>Eukaryota</taxon>
        <taxon>Metazoa</taxon>
        <taxon>Chordata</taxon>
        <taxon>Craniata</taxon>
        <taxon>Vertebrata</taxon>
        <taxon>Euteleostomi</taxon>
        <taxon>Mammalia</taxon>
        <taxon>Eutheria</taxon>
        <taxon>Euarchontoglires</taxon>
        <taxon>Glires</taxon>
        <taxon>Rodentia</taxon>
        <taxon>Myomorpha</taxon>
        <taxon>Muroidea</taxon>
        <taxon>Muridae</taxon>
        <taxon>Murinae</taxon>
        <taxon>Rattus</taxon>
    </lineage>
</organism>
<evidence type="ECO:0000250" key="1">
    <source>
        <dbReference type="UniProtKB" id="O35426"/>
    </source>
</evidence>
<evidence type="ECO:0000250" key="2">
    <source>
        <dbReference type="UniProtKB" id="P17861"/>
    </source>
</evidence>
<evidence type="ECO:0000255" key="3"/>
<evidence type="ECO:0000255" key="4">
    <source>
        <dbReference type="PROSITE-ProRule" id="PRU00978"/>
    </source>
</evidence>
<evidence type="ECO:0000256" key="5">
    <source>
        <dbReference type="SAM" id="MobiDB-lite"/>
    </source>
</evidence>
<evidence type="ECO:0000305" key="6"/>
<evidence type="ECO:0000312" key="7">
    <source>
        <dbReference type="RGD" id="1303073"/>
    </source>
</evidence>
<name>XBP1_RAT</name>
<protein>
    <recommendedName>
        <fullName evidence="2">X-box-binding protein 1</fullName>
    </recommendedName>
    <alternativeName>
        <fullName>Hepatocarcinogenesis-related transcription factor</fullName>
        <shortName>HTF</shortName>
    </alternativeName>
    <component>
        <recommendedName>
            <fullName evidence="2">X-box-binding protein 1, cytoplasmic form</fullName>
        </recommendedName>
    </component>
    <component>
        <recommendedName>
            <fullName evidence="2">X-box-binding protein 1, luminal form</fullName>
        </recommendedName>
    </component>
</protein>
<sequence>MVVVAAAPSAASAAPKVLLLSGQPASGGRALPLMVPGPRAAGSEASGTPQARKRQRLTHLSPEEKALRRKLKNRVAAQTARDRKKARMSELEQQVVDLEEENQKLQLENQLLREKTHGLVIENQELRTRLGMNALVTEEVSEAESKGNGVRLVAGSAESAALRLRAPLQQVQAQLSPPQNIFPWILTLLPLQILSLISFWAFWTSWTLSCFSNVLPQSLLIWRNSQRSTQKDLVPYQPPFLCQWGPHQPSWKPLMNSFVLTMYTPSL</sequence>
<dbReference type="EMBL" id="AB030238">
    <property type="protein sequence ID" value="BAA82600.1"/>
    <property type="molecule type" value="Genomic_DNA"/>
</dbReference>
<dbReference type="EMBL" id="BC079450">
    <property type="protein sequence ID" value="AAH79450.1"/>
    <property type="molecule type" value="mRNA"/>
</dbReference>
<dbReference type="PIR" id="JC4857">
    <property type="entry name" value="JC4857"/>
</dbReference>
<dbReference type="RefSeq" id="NP_001004210.1">
    <molecule id="Q9R1S4-1"/>
    <property type="nucleotide sequence ID" value="NM_001004210.2"/>
</dbReference>
<dbReference type="RefSeq" id="NP_001258660.1">
    <property type="nucleotide sequence ID" value="NM_001271731.1"/>
</dbReference>
<dbReference type="SMR" id="Q9R1S4"/>
<dbReference type="FunCoup" id="Q9R1S4">
    <property type="interactions" value="184"/>
</dbReference>
<dbReference type="STRING" id="10116.ENSRNOP00000014044"/>
<dbReference type="BindingDB" id="Q9R1S4"/>
<dbReference type="ChEMBL" id="CHEMBL3632453"/>
<dbReference type="PhosphoSitePlus" id="Q9R1S4"/>
<dbReference type="PaxDb" id="10116-ENSRNOP00000014044"/>
<dbReference type="GeneID" id="289754"/>
<dbReference type="KEGG" id="rno:289754"/>
<dbReference type="UCSC" id="RGD:1303073">
    <molecule id="Q9R1S4-1"/>
    <property type="organism name" value="rat"/>
</dbReference>
<dbReference type="AGR" id="RGD:1303073"/>
<dbReference type="CTD" id="7494"/>
<dbReference type="RGD" id="1303073">
    <property type="gene designation" value="Xbp1"/>
</dbReference>
<dbReference type="eggNOG" id="KOG4005">
    <property type="taxonomic scope" value="Eukaryota"/>
</dbReference>
<dbReference type="HOGENOM" id="CLU_069050_0_0_1"/>
<dbReference type="InParanoid" id="Q9R1S4"/>
<dbReference type="OrthoDB" id="88955at9989"/>
<dbReference type="PRO" id="PR:Q9R1S4"/>
<dbReference type="Proteomes" id="UP000002494">
    <property type="component" value="Unplaced"/>
</dbReference>
<dbReference type="GO" id="GO:0005737">
    <property type="term" value="C:cytoplasm"/>
    <property type="evidence" value="ECO:0000250"/>
    <property type="project" value="UniProtKB"/>
</dbReference>
<dbReference type="GO" id="GO:0005783">
    <property type="term" value="C:endoplasmic reticulum"/>
    <property type="evidence" value="ECO:0000250"/>
    <property type="project" value="UniProtKB"/>
</dbReference>
<dbReference type="GO" id="GO:0005789">
    <property type="term" value="C:endoplasmic reticulum membrane"/>
    <property type="evidence" value="ECO:0007669"/>
    <property type="project" value="UniProtKB-SubCell"/>
</dbReference>
<dbReference type="GO" id="GO:0005634">
    <property type="term" value="C:nucleus"/>
    <property type="evidence" value="ECO:0000266"/>
    <property type="project" value="RGD"/>
</dbReference>
<dbReference type="GO" id="GO:0098793">
    <property type="term" value="C:presynapse"/>
    <property type="evidence" value="ECO:0007669"/>
    <property type="project" value="GOC"/>
</dbReference>
<dbReference type="GO" id="GO:0090575">
    <property type="term" value="C:RNA polymerase II transcription regulator complex"/>
    <property type="evidence" value="ECO:0000266"/>
    <property type="project" value="RGD"/>
</dbReference>
<dbReference type="GO" id="GO:0031490">
    <property type="term" value="F:chromatin DNA binding"/>
    <property type="evidence" value="ECO:0000250"/>
    <property type="project" value="UniProtKB"/>
</dbReference>
<dbReference type="GO" id="GO:0000987">
    <property type="term" value="F:cis-regulatory region sequence-specific DNA binding"/>
    <property type="evidence" value="ECO:0000250"/>
    <property type="project" value="UniProtKB"/>
</dbReference>
<dbReference type="GO" id="GO:0003677">
    <property type="term" value="F:DNA binding"/>
    <property type="evidence" value="ECO:0000304"/>
    <property type="project" value="RGD"/>
</dbReference>
<dbReference type="GO" id="GO:0003700">
    <property type="term" value="F:DNA-binding transcription factor activity"/>
    <property type="evidence" value="ECO:0000314"/>
    <property type="project" value="RGD"/>
</dbReference>
<dbReference type="GO" id="GO:0000981">
    <property type="term" value="F:DNA-binding transcription factor activity, RNA polymerase II-specific"/>
    <property type="evidence" value="ECO:0000266"/>
    <property type="project" value="RGD"/>
</dbReference>
<dbReference type="GO" id="GO:0042802">
    <property type="term" value="F:identical protein binding"/>
    <property type="evidence" value="ECO:0000266"/>
    <property type="project" value="RGD"/>
</dbReference>
<dbReference type="GO" id="GO:0046982">
    <property type="term" value="F:protein heterodimerization activity"/>
    <property type="evidence" value="ECO:0000250"/>
    <property type="project" value="UniProtKB"/>
</dbReference>
<dbReference type="GO" id="GO:0000978">
    <property type="term" value="F:RNA polymerase II cis-regulatory region sequence-specific DNA binding"/>
    <property type="evidence" value="ECO:0000250"/>
    <property type="project" value="UniProtKB"/>
</dbReference>
<dbReference type="GO" id="GO:0000977">
    <property type="term" value="F:RNA polymerase II transcription regulatory region sequence-specific DNA binding"/>
    <property type="evidence" value="ECO:0000250"/>
    <property type="project" value="UniProtKB"/>
</dbReference>
<dbReference type="GO" id="GO:0043565">
    <property type="term" value="F:sequence-specific DNA binding"/>
    <property type="evidence" value="ECO:0000314"/>
    <property type="project" value="RGD"/>
</dbReference>
<dbReference type="GO" id="GO:1990837">
    <property type="term" value="F:sequence-specific double-stranded DNA binding"/>
    <property type="evidence" value="ECO:0000266"/>
    <property type="project" value="RGD"/>
</dbReference>
<dbReference type="GO" id="GO:0000976">
    <property type="term" value="F:transcription cis-regulatory region binding"/>
    <property type="evidence" value="ECO:0000266"/>
    <property type="project" value="RGD"/>
</dbReference>
<dbReference type="GO" id="GO:0044389">
    <property type="term" value="F:ubiquitin-like protein ligase binding"/>
    <property type="evidence" value="ECO:0000266"/>
    <property type="project" value="RGD"/>
</dbReference>
<dbReference type="GO" id="GO:0060612">
    <property type="term" value="P:adipose tissue development"/>
    <property type="evidence" value="ECO:0000250"/>
    <property type="project" value="UniProtKB"/>
</dbReference>
<dbReference type="GO" id="GO:0001525">
    <property type="term" value="P:angiogenesis"/>
    <property type="evidence" value="ECO:0000250"/>
    <property type="project" value="UniProtKB"/>
</dbReference>
<dbReference type="GO" id="GO:0071230">
    <property type="term" value="P:cellular response to amino acid stimulus"/>
    <property type="evidence" value="ECO:0000250"/>
    <property type="project" value="UniProtKB"/>
</dbReference>
<dbReference type="GO" id="GO:0071236">
    <property type="term" value="P:cellular response to antibiotic"/>
    <property type="evidence" value="ECO:0000270"/>
    <property type="project" value="RGD"/>
</dbReference>
<dbReference type="GO" id="GO:0071498">
    <property type="term" value="P:cellular response to fluid shear stress"/>
    <property type="evidence" value="ECO:0000250"/>
    <property type="project" value="UniProtKB"/>
</dbReference>
<dbReference type="GO" id="GO:0042149">
    <property type="term" value="P:cellular response to glucose starvation"/>
    <property type="evidence" value="ECO:0000250"/>
    <property type="project" value="UniProtKB"/>
</dbReference>
<dbReference type="GO" id="GO:0071353">
    <property type="term" value="P:cellular response to interleukin-4"/>
    <property type="evidence" value="ECO:0000250"/>
    <property type="project" value="UniProtKB"/>
</dbReference>
<dbReference type="GO" id="GO:0071499">
    <property type="term" value="P:cellular response to laminar fluid shear stress"/>
    <property type="evidence" value="ECO:0000250"/>
    <property type="project" value="UniProtKB"/>
</dbReference>
<dbReference type="GO" id="GO:1990830">
    <property type="term" value="P:cellular response to leukemia inhibitory factor"/>
    <property type="evidence" value="ECO:0000266"/>
    <property type="project" value="RGD"/>
</dbReference>
<dbReference type="GO" id="GO:0071222">
    <property type="term" value="P:cellular response to lipopolysaccharide"/>
    <property type="evidence" value="ECO:0000250"/>
    <property type="project" value="UniProtKB"/>
</dbReference>
<dbReference type="GO" id="GO:0071375">
    <property type="term" value="P:cellular response to peptide hormone stimulus"/>
    <property type="evidence" value="ECO:0000250"/>
    <property type="project" value="UniProtKB"/>
</dbReference>
<dbReference type="GO" id="GO:0035924">
    <property type="term" value="P:cellular response to vascular endothelial growth factor stimulus"/>
    <property type="evidence" value="ECO:0000266"/>
    <property type="project" value="RGD"/>
</dbReference>
<dbReference type="GO" id="GO:0042632">
    <property type="term" value="P:cholesterol homeostasis"/>
    <property type="evidence" value="ECO:0000250"/>
    <property type="project" value="UniProtKB"/>
</dbReference>
<dbReference type="GO" id="GO:0030968">
    <property type="term" value="P:endoplasmic reticulum unfolded protein response"/>
    <property type="evidence" value="ECO:0000314"/>
    <property type="project" value="RGD"/>
</dbReference>
<dbReference type="GO" id="GO:0001935">
    <property type="term" value="P:endothelial cell proliferation"/>
    <property type="evidence" value="ECO:0000250"/>
    <property type="project" value="UniProtKB"/>
</dbReference>
<dbReference type="GO" id="GO:0060691">
    <property type="term" value="P:epithelial cell maturation involved in salivary gland development"/>
    <property type="evidence" value="ECO:0000266"/>
    <property type="project" value="RGD"/>
</dbReference>
<dbReference type="GO" id="GO:0031017">
    <property type="term" value="P:exocrine pancreas development"/>
    <property type="evidence" value="ECO:0000266"/>
    <property type="project" value="RGD"/>
</dbReference>
<dbReference type="GO" id="GO:0055089">
    <property type="term" value="P:fatty acid homeostasis"/>
    <property type="evidence" value="ECO:0000250"/>
    <property type="project" value="UniProtKB"/>
</dbReference>
<dbReference type="GO" id="GO:0002071">
    <property type="term" value="P:glandular epithelial cell maturation"/>
    <property type="evidence" value="ECO:0000266"/>
    <property type="project" value="RGD"/>
</dbReference>
<dbReference type="GO" id="GO:0035356">
    <property type="term" value="P:intracellular triglyceride homeostasis"/>
    <property type="evidence" value="ECO:0000250"/>
    <property type="project" value="UniProtKB"/>
</dbReference>
<dbReference type="GO" id="GO:0070059">
    <property type="term" value="P:intrinsic apoptotic signaling pathway in response to endoplasmic reticulum stress"/>
    <property type="evidence" value="ECO:0000266"/>
    <property type="project" value="RGD"/>
</dbReference>
<dbReference type="GO" id="GO:0001889">
    <property type="term" value="P:liver development"/>
    <property type="evidence" value="ECO:0000250"/>
    <property type="project" value="UniProtKB"/>
</dbReference>
<dbReference type="GO" id="GO:0007517">
    <property type="term" value="P:muscle organ development"/>
    <property type="evidence" value="ECO:0007669"/>
    <property type="project" value="UniProtKB-KW"/>
</dbReference>
<dbReference type="GO" id="GO:0043066">
    <property type="term" value="P:negative regulation of apoptotic process"/>
    <property type="evidence" value="ECO:0000250"/>
    <property type="project" value="UniProtKB"/>
</dbReference>
<dbReference type="GO" id="GO:1902236">
    <property type="term" value="P:negative regulation of endoplasmic reticulum stress-induced intrinsic apoptotic signaling pathway"/>
    <property type="evidence" value="ECO:0000315"/>
    <property type="project" value="ParkinsonsUK-UCL"/>
</dbReference>
<dbReference type="GO" id="GO:0045766">
    <property type="term" value="P:positive regulation of angiogenesis"/>
    <property type="evidence" value="ECO:0000266"/>
    <property type="project" value="RGD"/>
</dbReference>
<dbReference type="GO" id="GO:0045579">
    <property type="term" value="P:positive regulation of B cell differentiation"/>
    <property type="evidence" value="ECO:0000250"/>
    <property type="project" value="UniProtKB"/>
</dbReference>
<dbReference type="GO" id="GO:0030335">
    <property type="term" value="P:positive regulation of cell migration"/>
    <property type="evidence" value="ECO:0000266"/>
    <property type="project" value="RGD"/>
</dbReference>
<dbReference type="GO" id="GO:0008284">
    <property type="term" value="P:positive regulation of cell population proliferation"/>
    <property type="evidence" value="ECO:0000266"/>
    <property type="project" value="RGD"/>
</dbReference>
<dbReference type="GO" id="GO:0045600">
    <property type="term" value="P:positive regulation of fat cell differentiation"/>
    <property type="evidence" value="ECO:0000250"/>
    <property type="project" value="UniProtKB"/>
</dbReference>
<dbReference type="GO" id="GO:2000347">
    <property type="term" value="P:positive regulation of hepatocyte proliferation"/>
    <property type="evidence" value="ECO:0000250"/>
    <property type="project" value="UniProtKB"/>
</dbReference>
<dbReference type="GO" id="GO:0002639">
    <property type="term" value="P:positive regulation of immunoglobulin production"/>
    <property type="evidence" value="ECO:0000250"/>
    <property type="project" value="UniProtKB"/>
</dbReference>
<dbReference type="GO" id="GO:1903489">
    <property type="term" value="P:positive regulation of lactation"/>
    <property type="evidence" value="ECO:0000250"/>
    <property type="project" value="UniProtKB"/>
</dbReference>
<dbReference type="GO" id="GO:0045348">
    <property type="term" value="P:positive regulation of MHC class II biosynthetic process"/>
    <property type="evidence" value="ECO:0000250"/>
    <property type="project" value="UniProtKB"/>
</dbReference>
<dbReference type="GO" id="GO:1900100">
    <property type="term" value="P:positive regulation of plasma cell differentiation"/>
    <property type="evidence" value="ECO:0000250"/>
    <property type="project" value="UniProtKB"/>
</dbReference>
<dbReference type="GO" id="GO:0045582">
    <property type="term" value="P:positive regulation of T cell differentiation"/>
    <property type="evidence" value="ECO:0000250"/>
    <property type="project" value="UniProtKB"/>
</dbReference>
<dbReference type="GO" id="GO:0045944">
    <property type="term" value="P:positive regulation of transcription by RNA polymerase II"/>
    <property type="evidence" value="ECO:0000250"/>
    <property type="project" value="UniProtKB"/>
</dbReference>
<dbReference type="GO" id="GO:0035470">
    <property type="term" value="P:positive regulation of vascular wound healing"/>
    <property type="evidence" value="ECO:0000266"/>
    <property type="project" value="RGD"/>
</dbReference>
<dbReference type="GO" id="GO:0031648">
    <property type="term" value="P:protein destabilization"/>
    <property type="evidence" value="ECO:0000250"/>
    <property type="project" value="UniProtKB"/>
</dbReference>
<dbReference type="GO" id="GO:0010506">
    <property type="term" value="P:regulation of autophagy"/>
    <property type="evidence" value="ECO:0000250"/>
    <property type="project" value="UniProtKB"/>
</dbReference>
<dbReference type="GO" id="GO:0006355">
    <property type="term" value="P:regulation of DNA-templated transcription"/>
    <property type="evidence" value="ECO:0000304"/>
    <property type="project" value="RGD"/>
</dbReference>
<dbReference type="GO" id="GO:0051602">
    <property type="term" value="P:response to electrical stimulus"/>
    <property type="evidence" value="ECO:0000314"/>
    <property type="project" value="RGD"/>
</dbReference>
<dbReference type="GO" id="GO:0034976">
    <property type="term" value="P:response to endoplasmic reticulum stress"/>
    <property type="evidence" value="ECO:0000266"/>
    <property type="project" value="RGD"/>
</dbReference>
<dbReference type="GO" id="GO:1990418">
    <property type="term" value="P:response to insulin-like growth factor stimulus"/>
    <property type="evidence" value="ECO:0000250"/>
    <property type="project" value="UniProtKB"/>
</dbReference>
<dbReference type="GO" id="GO:0007584">
    <property type="term" value="P:response to nutrient"/>
    <property type="evidence" value="ECO:0000270"/>
    <property type="project" value="RGD"/>
</dbReference>
<dbReference type="GO" id="GO:0009410">
    <property type="term" value="P:response to xenobiotic stimulus"/>
    <property type="evidence" value="ECO:0000314"/>
    <property type="project" value="RGD"/>
</dbReference>
<dbReference type="GO" id="GO:0060096">
    <property type="term" value="P:serotonin secretion, neurotransmission"/>
    <property type="evidence" value="ECO:0000314"/>
    <property type="project" value="RGD"/>
</dbReference>
<dbReference type="GO" id="GO:0055092">
    <property type="term" value="P:sterol homeostasis"/>
    <property type="evidence" value="ECO:0000250"/>
    <property type="project" value="UniProtKB"/>
</dbReference>
<dbReference type="GO" id="GO:0006366">
    <property type="term" value="P:transcription by RNA polymerase II"/>
    <property type="evidence" value="ECO:0000314"/>
    <property type="project" value="RGD"/>
</dbReference>
<dbReference type="GO" id="GO:0006511">
    <property type="term" value="P:ubiquitin-dependent protein catabolic process"/>
    <property type="evidence" value="ECO:0000250"/>
    <property type="project" value="UniProtKB"/>
</dbReference>
<dbReference type="CDD" id="cd14691">
    <property type="entry name" value="bZIP_XBP1"/>
    <property type="match status" value="1"/>
</dbReference>
<dbReference type="FunFam" id="1.20.5.170:FF:000049">
    <property type="entry name" value="X-box binding protein 1"/>
    <property type="match status" value="1"/>
</dbReference>
<dbReference type="Gene3D" id="1.20.5.170">
    <property type="match status" value="1"/>
</dbReference>
<dbReference type="InterPro" id="IPR004827">
    <property type="entry name" value="bZIP"/>
</dbReference>
<dbReference type="InterPro" id="IPR046347">
    <property type="entry name" value="bZIP_sf"/>
</dbReference>
<dbReference type="InterPro" id="IPR052470">
    <property type="entry name" value="ER_Stress-Reg_TF"/>
</dbReference>
<dbReference type="PANTHER" id="PTHR46542">
    <property type="entry name" value="X-BOX BINDING PROTEIN 1"/>
    <property type="match status" value="1"/>
</dbReference>
<dbReference type="PANTHER" id="PTHR46542:SF3">
    <property type="entry name" value="X-BOX-BINDING PROTEIN 1"/>
    <property type="match status" value="1"/>
</dbReference>
<dbReference type="Pfam" id="PF07716">
    <property type="entry name" value="bZIP_2"/>
    <property type="match status" value="1"/>
</dbReference>
<dbReference type="SMART" id="SM00338">
    <property type="entry name" value="BRLZ"/>
    <property type="match status" value="1"/>
</dbReference>
<dbReference type="SUPFAM" id="SSF57959">
    <property type="entry name" value="Leucine zipper domain"/>
    <property type="match status" value="1"/>
</dbReference>
<dbReference type="PROSITE" id="PS50217">
    <property type="entry name" value="BZIP"/>
    <property type="match status" value="1"/>
</dbReference>
<dbReference type="PROSITE" id="PS00036">
    <property type="entry name" value="BZIP_BASIC"/>
    <property type="match status" value="1"/>
</dbReference>
<feature type="chain" id="PRO_0000076545" description="X-box-binding protein 1">
    <location>
        <begin position="1"/>
        <end position="267"/>
    </location>
</feature>
<feature type="chain" id="PRO_0000432571" description="X-box-binding protein 1, cytoplasmic form" evidence="2">
    <location>
        <begin position="1"/>
        <end position="188"/>
    </location>
</feature>
<feature type="chain" id="PRO_0000432572" description="X-box-binding protein 1, luminal form" evidence="2">
    <location>
        <begin position="191"/>
        <end position="267"/>
    </location>
</feature>
<feature type="topological domain" description="Cytoplasmic" evidence="6">
    <location>
        <begin position="1"/>
        <end position="180"/>
    </location>
</feature>
<feature type="transmembrane region" description="Helical; Signal-anchor for type II membrane protein" evidence="2 3">
    <location>
        <begin position="181"/>
        <end position="198"/>
    </location>
</feature>
<feature type="topological domain" description="Lumenal" evidence="6">
    <location>
        <begin position="199"/>
        <end position="267"/>
    </location>
</feature>
<feature type="domain" description="bZIP" evidence="4">
    <location>
        <begin position="63"/>
        <end position="126"/>
    </location>
</feature>
<feature type="region of interest" description="Disordered" evidence="5">
    <location>
        <begin position="35"/>
        <end position="60"/>
    </location>
</feature>
<feature type="region of interest" description="Basic motif" evidence="4">
    <location>
        <begin position="65"/>
        <end position="87"/>
    </location>
</feature>
<feature type="region of interest" description="Nuclear localization signal (NLS)" evidence="2">
    <location>
        <begin position="69"/>
        <end position="85"/>
    </location>
</feature>
<feature type="region of interest" description="Leucine-zipper" evidence="4">
    <location>
        <begin position="91"/>
        <end position="126"/>
    </location>
</feature>
<feature type="site" description="Cleavage; by HM13/SPP" evidence="2">
    <location>
        <begin position="185"/>
        <end position="186"/>
    </location>
</feature>
<feature type="modified residue" description="Phosphoserine" evidence="2">
    <location>
        <position position="61"/>
    </location>
</feature>
<gene>
    <name evidence="2 7" type="primary">Xbp1</name>
    <name type="synonym">Htf</name>
</gene>